<organism>
    <name type="scientific">Danio rerio</name>
    <name type="common">Zebrafish</name>
    <name type="synonym">Brachydanio rerio</name>
    <dbReference type="NCBI Taxonomy" id="7955"/>
    <lineage>
        <taxon>Eukaryota</taxon>
        <taxon>Metazoa</taxon>
        <taxon>Chordata</taxon>
        <taxon>Craniata</taxon>
        <taxon>Vertebrata</taxon>
        <taxon>Euteleostomi</taxon>
        <taxon>Actinopterygii</taxon>
        <taxon>Neopterygii</taxon>
        <taxon>Teleostei</taxon>
        <taxon>Ostariophysi</taxon>
        <taxon>Cypriniformes</taxon>
        <taxon>Danionidae</taxon>
        <taxon>Danioninae</taxon>
        <taxon>Danio</taxon>
    </lineage>
</organism>
<feature type="chain" id="PRO_0000448962" description="Osmosensitive cation channel TMEM63C">
    <location>
        <begin position="1"/>
        <end position="825"/>
    </location>
</feature>
<feature type="topological domain" description="Extracellular" evidence="1">
    <location>
        <begin position="1"/>
        <end position="50"/>
    </location>
</feature>
<feature type="transmembrane region" description="Helical; Name=TM0" evidence="1">
    <location>
        <begin position="51"/>
        <end position="75"/>
    </location>
</feature>
<feature type="topological domain" description="Cytoplasmic" evidence="1">
    <location>
        <begin position="76"/>
        <end position="141"/>
    </location>
</feature>
<feature type="transmembrane region" description="Helical; Name=TM1" evidence="1">
    <location>
        <begin position="142"/>
        <end position="174"/>
    </location>
</feature>
<feature type="topological domain" description="Extracellular" evidence="1">
    <location>
        <begin position="175"/>
        <end position="198"/>
    </location>
</feature>
<feature type="transmembrane region" description="Helical; Name=TM2" evidence="1">
    <location>
        <begin position="199"/>
        <end position="223"/>
    </location>
</feature>
<feature type="topological domain" description="Cytoplasmic" evidence="1">
    <location>
        <begin position="224"/>
        <end position="418"/>
    </location>
</feature>
<feature type="transmembrane region" description="Helical; Name=TM3" evidence="1">
    <location>
        <begin position="419"/>
        <end position="448"/>
    </location>
</feature>
<feature type="topological domain" description="Extracellular" evidence="1">
    <location>
        <begin position="449"/>
        <end position="463"/>
    </location>
</feature>
<feature type="transmembrane region" description="Helical; Name=TM4" evidence="1">
    <location>
        <begin position="464"/>
        <end position="493"/>
    </location>
</feature>
<feature type="topological domain" description="Cytoplasmic" evidence="1">
    <location>
        <begin position="494"/>
        <end position="497"/>
    </location>
</feature>
<feature type="transmembrane region" description="Helical; Name=TM5" evidence="1">
    <location>
        <begin position="498"/>
        <end position="534"/>
    </location>
</feature>
<feature type="topological domain" description="Extracellular" evidence="1">
    <location>
        <begin position="535"/>
        <end position="557"/>
    </location>
</feature>
<feature type="transmembrane region" description="Helical; Name=TM6" evidence="1">
    <location>
        <begin position="558"/>
        <end position="590"/>
    </location>
</feature>
<feature type="topological domain" description="Cytoplasmic" evidence="1">
    <location>
        <begin position="591"/>
        <end position="610"/>
    </location>
</feature>
<feature type="transmembrane region" description="Helical; Name=TM7" evidence="1">
    <location>
        <begin position="611"/>
        <end position="629"/>
    </location>
</feature>
<feature type="topological domain" description="Extracellular" evidence="1">
    <location>
        <begin position="630"/>
        <end position="632"/>
    </location>
</feature>
<feature type="transmembrane region" description="Helical; Name=TM8" evidence="1">
    <location>
        <begin position="633"/>
        <end position="657"/>
    </location>
</feature>
<feature type="topological domain" description="Cytoplasmic" evidence="1">
    <location>
        <begin position="658"/>
        <end position="664"/>
    </location>
</feature>
<feature type="transmembrane region" description="Helical; Name=TM9" evidence="1">
    <location>
        <begin position="665"/>
        <end position="693"/>
    </location>
</feature>
<feature type="topological domain" description="Extracellular" evidence="1">
    <location>
        <begin position="694"/>
        <end position="698"/>
    </location>
</feature>
<feature type="transmembrane region" description="Helical; Name=TM10" evidence="1">
    <location>
        <begin position="699"/>
        <end position="719"/>
    </location>
</feature>
<feature type="topological domain" description="Cytoplasmic" evidence="1">
    <location>
        <begin position="720"/>
        <end position="825"/>
    </location>
</feature>
<feature type="region of interest" description="Disordered" evidence="4">
    <location>
        <begin position="98"/>
        <end position="117"/>
    </location>
</feature>
<feature type="region of interest" description="Disordered" evidence="4">
    <location>
        <begin position="777"/>
        <end position="825"/>
    </location>
</feature>
<feature type="compositionally biased region" description="Polar residues" evidence="4">
    <location>
        <begin position="779"/>
        <end position="793"/>
    </location>
</feature>
<feature type="compositionally biased region" description="Acidic residues" evidence="4">
    <location>
        <begin position="796"/>
        <end position="809"/>
    </location>
</feature>
<gene>
    <name type="primary">tmem63c</name>
    <name type="synonym">csc1</name>
</gene>
<keyword id="KW-0106">Calcium</keyword>
<keyword id="KW-1003">Cell membrane</keyword>
<keyword id="KW-0256">Endoplasmic reticulum</keyword>
<keyword id="KW-0407">Ion channel</keyword>
<keyword id="KW-0406">Ion transport</keyword>
<keyword id="KW-0472">Membrane</keyword>
<keyword id="KW-1185">Reference proteome</keyword>
<keyword id="KW-0812">Transmembrane</keyword>
<keyword id="KW-1133">Transmembrane helix</keyword>
<keyword id="KW-0813">Transport</keyword>
<reference key="1">
    <citation type="journal article" date="2013" name="Nature">
        <title>The zebrafish reference genome sequence and its relationship to the human genome.</title>
        <authorList>
            <person name="Howe K."/>
            <person name="Clark M.D."/>
            <person name="Torroja C.F."/>
            <person name="Torrance J."/>
            <person name="Berthelot C."/>
            <person name="Muffato M."/>
            <person name="Collins J.E."/>
            <person name="Humphray S."/>
            <person name="McLaren K."/>
            <person name="Matthews L."/>
            <person name="McLaren S."/>
            <person name="Sealy I."/>
            <person name="Caccamo M."/>
            <person name="Churcher C."/>
            <person name="Scott C."/>
            <person name="Barrett J.C."/>
            <person name="Koch R."/>
            <person name="Rauch G.J."/>
            <person name="White S."/>
            <person name="Chow W."/>
            <person name="Kilian B."/>
            <person name="Quintais L.T."/>
            <person name="Guerra-Assuncao J.A."/>
            <person name="Zhou Y."/>
            <person name="Gu Y."/>
            <person name="Yen J."/>
            <person name="Vogel J.H."/>
            <person name="Eyre T."/>
            <person name="Redmond S."/>
            <person name="Banerjee R."/>
            <person name="Chi J."/>
            <person name="Fu B."/>
            <person name="Langley E."/>
            <person name="Maguire S.F."/>
            <person name="Laird G.K."/>
            <person name="Lloyd D."/>
            <person name="Kenyon E."/>
            <person name="Donaldson S."/>
            <person name="Sehra H."/>
            <person name="Almeida-King J."/>
            <person name="Loveland J."/>
            <person name="Trevanion S."/>
            <person name="Jones M."/>
            <person name="Quail M."/>
            <person name="Willey D."/>
            <person name="Hunt A."/>
            <person name="Burton J."/>
            <person name="Sims S."/>
            <person name="McLay K."/>
            <person name="Plumb B."/>
            <person name="Davis J."/>
            <person name="Clee C."/>
            <person name="Oliver K."/>
            <person name="Clark R."/>
            <person name="Riddle C."/>
            <person name="Elliot D."/>
            <person name="Threadgold G."/>
            <person name="Harden G."/>
            <person name="Ware D."/>
            <person name="Begum S."/>
            <person name="Mortimore B."/>
            <person name="Kerry G."/>
            <person name="Heath P."/>
            <person name="Phillimore B."/>
            <person name="Tracey A."/>
            <person name="Corby N."/>
            <person name="Dunn M."/>
            <person name="Johnson C."/>
            <person name="Wood J."/>
            <person name="Clark S."/>
            <person name="Pelan S."/>
            <person name="Griffiths G."/>
            <person name="Smith M."/>
            <person name="Glithero R."/>
            <person name="Howden P."/>
            <person name="Barker N."/>
            <person name="Lloyd C."/>
            <person name="Stevens C."/>
            <person name="Harley J."/>
            <person name="Holt K."/>
            <person name="Panagiotidis G."/>
            <person name="Lovell J."/>
            <person name="Beasley H."/>
            <person name="Henderson C."/>
            <person name="Gordon D."/>
            <person name="Auger K."/>
            <person name="Wright D."/>
            <person name="Collins J."/>
            <person name="Raisen C."/>
            <person name="Dyer L."/>
            <person name="Leung K."/>
            <person name="Robertson L."/>
            <person name="Ambridge K."/>
            <person name="Leongamornlert D."/>
            <person name="McGuire S."/>
            <person name="Gilderthorp R."/>
            <person name="Griffiths C."/>
            <person name="Manthravadi D."/>
            <person name="Nichol S."/>
            <person name="Barker G."/>
            <person name="Whitehead S."/>
            <person name="Kay M."/>
            <person name="Brown J."/>
            <person name="Murnane C."/>
            <person name="Gray E."/>
            <person name="Humphries M."/>
            <person name="Sycamore N."/>
            <person name="Barker D."/>
            <person name="Saunders D."/>
            <person name="Wallis J."/>
            <person name="Babbage A."/>
            <person name="Hammond S."/>
            <person name="Mashreghi-Mohammadi M."/>
            <person name="Barr L."/>
            <person name="Martin S."/>
            <person name="Wray P."/>
            <person name="Ellington A."/>
            <person name="Matthews N."/>
            <person name="Ellwood M."/>
            <person name="Woodmansey R."/>
            <person name="Clark G."/>
            <person name="Cooper J."/>
            <person name="Tromans A."/>
            <person name="Grafham D."/>
            <person name="Skuce C."/>
            <person name="Pandian R."/>
            <person name="Andrews R."/>
            <person name="Harrison E."/>
            <person name="Kimberley A."/>
            <person name="Garnett J."/>
            <person name="Fosker N."/>
            <person name="Hall R."/>
            <person name="Garner P."/>
            <person name="Kelly D."/>
            <person name="Bird C."/>
            <person name="Palmer S."/>
            <person name="Gehring I."/>
            <person name="Berger A."/>
            <person name="Dooley C.M."/>
            <person name="Ersan-Urun Z."/>
            <person name="Eser C."/>
            <person name="Geiger H."/>
            <person name="Geisler M."/>
            <person name="Karotki L."/>
            <person name="Kirn A."/>
            <person name="Konantz J."/>
            <person name="Konantz M."/>
            <person name="Oberlander M."/>
            <person name="Rudolph-Geiger S."/>
            <person name="Teucke M."/>
            <person name="Lanz C."/>
            <person name="Raddatz G."/>
            <person name="Osoegawa K."/>
            <person name="Zhu B."/>
            <person name="Rapp A."/>
            <person name="Widaa S."/>
            <person name="Langford C."/>
            <person name="Yang F."/>
            <person name="Schuster S.C."/>
            <person name="Carter N.P."/>
            <person name="Harrow J."/>
            <person name="Ning Z."/>
            <person name="Herrero J."/>
            <person name="Searle S.M."/>
            <person name="Enright A."/>
            <person name="Geisler R."/>
            <person name="Plasterk R.H."/>
            <person name="Lee C."/>
            <person name="Westerfield M."/>
            <person name="de Jong P.J."/>
            <person name="Zon L.I."/>
            <person name="Postlethwait J.H."/>
            <person name="Nusslein-Volhard C."/>
            <person name="Hubbard T.J."/>
            <person name="Roest Crollius H."/>
            <person name="Rogers J."/>
            <person name="Stemple D.L."/>
        </authorList>
    </citation>
    <scope>NUCLEOTIDE SEQUENCE [LARGE SCALE GENOMIC DNA]</scope>
    <source>
        <strain>Tuebingen</strain>
    </source>
</reference>
<reference key="2">
    <citation type="journal article" date="2019" name="Elife">
        <title>Analysis of the genomic architecture of a complex trait locus in hypertensive rat models links Tmem63c to kidney damage.</title>
        <authorList>
            <person name="Schulz A."/>
            <person name="Mueller N.V."/>
            <person name="van de Lest N.A."/>
            <person name="Eisenreich A."/>
            <person name="Schmidbauer M."/>
            <person name="Barysenka A."/>
            <person name="Purfuerst B."/>
            <person name="Sporbert A."/>
            <person name="Lorenzen T."/>
            <person name="Meyer A.M."/>
            <person name="Herlan L."/>
            <person name="Witten A."/>
            <person name="Ruehle F."/>
            <person name="Zhou W."/>
            <person name="de Heer E."/>
            <person name="Scharpfenecker M."/>
            <person name="Panakova D."/>
            <person name="Stoll M."/>
            <person name="Kreutz R."/>
        </authorList>
    </citation>
    <scope>FUNCTION</scope>
    <scope>DISRUPTION PHENOTYPE</scope>
</reference>
<proteinExistence type="inferred from homology"/>
<evidence type="ECO:0000250" key="1">
    <source>
        <dbReference type="UniProtKB" id="Q8CBX0"/>
    </source>
</evidence>
<evidence type="ECO:0000250" key="2">
    <source>
        <dbReference type="UniProtKB" id="Q9P1W3"/>
    </source>
</evidence>
<evidence type="ECO:0000255" key="3"/>
<evidence type="ECO:0000256" key="4">
    <source>
        <dbReference type="SAM" id="MobiDB-lite"/>
    </source>
</evidence>
<evidence type="ECO:0000269" key="5">
    <source>
    </source>
</evidence>
<evidence type="ECO:0000305" key="6"/>
<accession>X1WEM4</accession>
<sequence>MAFESWPAGGVRPVEELDVRSFLMEENSTAERCYRSHSRSSVLQGLPFGGVPTVLAINVVLWLILLLIFSCLRKAAWDYGRLALLMKNDSLTSLFYGEQSEKEKTPSDSSPSDSETKDMGFCSWLTSLYHMKDEEIRSKCGIDAVTYLSFQRHIILLMMVVCLLSLTIILPVNLSGNLLGDNPENFGRTTVVNVPAQNIFLWLHSIFALLYFVITVLCMAHHSSRLEYREDEKVARTLMITSIPREISDPGLITKHLHEAYPSCTVTDIHFCFNVQKLMKLDSERRKAMKGRLYFTTKAQKNGRIMIKTHPCAQIFCCDICGFEKVDAEQYYSELEEKLTDEFNAEKNWISMKRLGIAFVTFRDERMTAVIVKDYSRARCRHKPQQSSITTVVRSHQWDVSYAPAPNDIIWENLSVCGPRWWLRCILLNILLFLLLFFLTTPAIIVNTMDKFNVTRPVESLRNPVITQFFPTLLLWAFSILLPFIVYYSSFFEYHWTRSGENQVTMHKCFLLLVFMVIILPSLGLSSLNLFFRWLFDVRFLDETDVKFQCVFLPDNGAFFVNYVITSSLIGTAMELLRIPALLVYSLRLCFAKSKAECIHVKISQAYEFQFGLEYAWTMCIFSVSMTYSITCPVIVPFGLLYLVLKHMVDRYNIYYAYTPTKLNQRIHAAAISQVVVAPILCMFWLLFFSVLRLGPVQPITLFTFITLLCSIAFSCFGFCMKKLRADRSTSYQMSDQTTEGGFSDAERSTISTTATANLFIASVLLEPELGLTPMPSPAHQSYGTMVNSQSSVRDAEEDEEKDLEETLETELKDDLLMDSPVAFQ</sequence>
<protein>
    <recommendedName>
        <fullName evidence="6">Osmosensitive cation channel TMEM63C</fullName>
    </recommendedName>
    <alternativeName>
        <fullName>Calcium permeable stress-gated cation channel 1</fullName>
    </alternativeName>
    <alternativeName>
        <fullName>Transmembrane protein 63c</fullName>
    </alternativeName>
</protein>
<comment type="function">
    <text evidence="2 5">Acts as an osmosensitive cation channel preferentially activated upon hypotonic stress (By similarity). In contrast to tmem63b, does not show phospholipid scramblase activity (By similarity). Required for the functional integrity of the kidney glomerular filtration barrier (PubMed:30900988).</text>
</comment>
<comment type="catalytic activity">
    <reaction evidence="1">
        <text>Ca(2+)(in) = Ca(2+)(out)</text>
        <dbReference type="Rhea" id="RHEA:29671"/>
        <dbReference type="ChEBI" id="CHEBI:29108"/>
    </reaction>
</comment>
<comment type="subunit">
    <text evidence="2">Monomer.</text>
</comment>
<comment type="subcellular location">
    <subcellularLocation>
        <location evidence="2">Endoplasmic reticulum membrane</location>
        <topology evidence="3">Multi-pass membrane protein</topology>
    </subcellularLocation>
    <subcellularLocation>
        <location evidence="2">Cell membrane</location>
        <topology evidence="3">Multi-pass membrane protein</topology>
    </subcellularLocation>
</comment>
<comment type="disruption phenotype">
    <text evidence="5">Morpholino knockdown induced a glomerular filtration barrier defect.</text>
</comment>
<comment type="similarity">
    <text evidence="6">Belongs to the CSC1 (TC 1.A.17) family.</text>
</comment>
<name>TM63C_DANRE</name>
<dbReference type="EMBL" id="BX546474">
    <property type="status" value="NOT_ANNOTATED_CDS"/>
    <property type="molecule type" value="Genomic_DNA"/>
</dbReference>
<dbReference type="RefSeq" id="XP_005158939.1">
    <property type="nucleotide sequence ID" value="XM_005158882.5"/>
</dbReference>
<dbReference type="SMR" id="X1WEM4"/>
<dbReference type="FunCoup" id="X1WEM4">
    <property type="interactions" value="1771"/>
</dbReference>
<dbReference type="STRING" id="7955.ENSDARP00000128675"/>
<dbReference type="PaxDb" id="7955-ENSDARP00000128675"/>
<dbReference type="Ensembl" id="ENSDART00000156260">
    <property type="protein sequence ID" value="ENSDARP00000128675"/>
    <property type="gene ID" value="ENSDARG00000004158"/>
</dbReference>
<dbReference type="GeneID" id="100000800"/>
<dbReference type="AGR" id="ZFIN:ZDB-GENE-120928-2"/>
<dbReference type="CTD" id="57156"/>
<dbReference type="ZFIN" id="ZDB-GENE-120928-2">
    <property type="gene designation" value="tmem63c"/>
</dbReference>
<dbReference type="eggNOG" id="KOG1134">
    <property type="taxonomic scope" value="Eukaryota"/>
</dbReference>
<dbReference type="InParanoid" id="X1WEM4"/>
<dbReference type="OMA" id="HCHHEER"/>
<dbReference type="OrthoDB" id="1689567at2759"/>
<dbReference type="PhylomeDB" id="X1WEM4"/>
<dbReference type="PRO" id="PR:X1WEM4"/>
<dbReference type="Proteomes" id="UP000000437">
    <property type="component" value="Chromosome 17"/>
</dbReference>
<dbReference type="Bgee" id="ENSDARG00000004158">
    <property type="expression patterns" value="Expressed in brain and 7 other cell types or tissues"/>
</dbReference>
<dbReference type="GO" id="GO:0005886">
    <property type="term" value="C:plasma membrane"/>
    <property type="evidence" value="ECO:0000250"/>
    <property type="project" value="UniProtKB"/>
</dbReference>
<dbReference type="GO" id="GO:0005227">
    <property type="term" value="F:calcium-activated cation channel activity"/>
    <property type="evidence" value="ECO:0000318"/>
    <property type="project" value="GO_Central"/>
</dbReference>
<dbReference type="GO" id="GO:1990760">
    <property type="term" value="F:osmolarity-sensing monoatomic cation channel activity"/>
    <property type="evidence" value="ECO:0000250"/>
    <property type="project" value="UniProtKB"/>
</dbReference>
<dbReference type="GO" id="GO:0003094">
    <property type="term" value="P:glomerular filtration"/>
    <property type="evidence" value="ECO:0000315"/>
    <property type="project" value="UniProtKB"/>
</dbReference>
<dbReference type="GO" id="GO:0032835">
    <property type="term" value="P:glomerulus development"/>
    <property type="evidence" value="ECO:0000315"/>
    <property type="project" value="ZFIN"/>
</dbReference>
<dbReference type="InterPro" id="IPR045122">
    <property type="entry name" value="Csc1-like"/>
</dbReference>
<dbReference type="InterPro" id="IPR003864">
    <property type="entry name" value="CSC1/OSCA1-like_7TM"/>
</dbReference>
<dbReference type="InterPro" id="IPR027815">
    <property type="entry name" value="CSC1/OSCA1-like_cyt"/>
</dbReference>
<dbReference type="InterPro" id="IPR032880">
    <property type="entry name" value="Csc1/OSCA1-like_N"/>
</dbReference>
<dbReference type="PANTHER" id="PTHR13018:SF21">
    <property type="entry name" value="CALCIUM PERMEABLE STRESS-GATED CATION CHANNEL 1"/>
    <property type="match status" value="1"/>
</dbReference>
<dbReference type="PANTHER" id="PTHR13018">
    <property type="entry name" value="PROBABLE MEMBRANE PROTEIN DUF221-RELATED"/>
    <property type="match status" value="1"/>
</dbReference>
<dbReference type="Pfam" id="PF14703">
    <property type="entry name" value="PHM7_cyt"/>
    <property type="match status" value="1"/>
</dbReference>
<dbReference type="Pfam" id="PF02714">
    <property type="entry name" value="RSN1_7TM"/>
    <property type="match status" value="1"/>
</dbReference>
<dbReference type="Pfam" id="PF13967">
    <property type="entry name" value="RSN1_TM"/>
    <property type="match status" value="1"/>
</dbReference>